<dbReference type="EC" id="2.7.4.14" evidence="1"/>
<dbReference type="EMBL" id="AF000147">
    <property type="protein sequence ID" value="AAB71135.1"/>
    <property type="molecule type" value="mRNA"/>
</dbReference>
<dbReference type="EMBL" id="AC137518">
    <property type="status" value="NOT_ANNOTATED_CDS"/>
    <property type="molecule type" value="Genomic_DNA"/>
</dbReference>
<dbReference type="EMBL" id="CP002688">
    <property type="protein sequence ID" value="AED93558.1"/>
    <property type="molecule type" value="Genomic_DNA"/>
</dbReference>
<dbReference type="EMBL" id="CP002688">
    <property type="protein sequence ID" value="AED93559.1"/>
    <property type="molecule type" value="Genomic_DNA"/>
</dbReference>
<dbReference type="EMBL" id="CP002688">
    <property type="protein sequence ID" value="AED93560.1"/>
    <property type="molecule type" value="Genomic_DNA"/>
</dbReference>
<dbReference type="EMBL" id="CP002688">
    <property type="protein sequence ID" value="ANM70813.1"/>
    <property type="molecule type" value="Genomic_DNA"/>
</dbReference>
<dbReference type="EMBL" id="BT029445">
    <property type="protein sequence ID" value="ABK59674.1"/>
    <property type="molecule type" value="mRNA"/>
</dbReference>
<dbReference type="RefSeq" id="NP_001031942.1">
    <molecule id="O04905-1"/>
    <property type="nucleotide sequence ID" value="NM_001036865.1"/>
</dbReference>
<dbReference type="RefSeq" id="NP_001332394.1">
    <molecule id="O04905-1"/>
    <property type="nucleotide sequence ID" value="NM_001343973.1"/>
</dbReference>
<dbReference type="RefSeq" id="NP_850867.1">
    <molecule id="O04905-2"/>
    <property type="nucleotide sequence ID" value="NM_180536.3"/>
</dbReference>
<dbReference type="RefSeq" id="NP_850868.1">
    <molecule id="O04905-1"/>
    <property type="nucleotide sequence ID" value="NM_180537.3"/>
</dbReference>
<dbReference type="SMR" id="O04905"/>
<dbReference type="BioGRID" id="17985">
    <property type="interactions" value="3"/>
</dbReference>
<dbReference type="FunCoup" id="O04905">
    <property type="interactions" value="3291"/>
</dbReference>
<dbReference type="IntAct" id="O04905">
    <property type="interactions" value="3"/>
</dbReference>
<dbReference type="STRING" id="3702.O04905"/>
<dbReference type="iPTMnet" id="O04905"/>
<dbReference type="PaxDb" id="3702-AT5G26667.1"/>
<dbReference type="ProteomicsDB" id="247323">
    <molecule id="O04905-1"/>
</dbReference>
<dbReference type="EnsemblPlants" id="AT5G26667.1">
    <molecule id="O04905-2"/>
    <property type="protein sequence ID" value="AT5G26667.1"/>
    <property type="gene ID" value="AT5G26667"/>
</dbReference>
<dbReference type="EnsemblPlants" id="AT5G26667.2">
    <molecule id="O04905-1"/>
    <property type="protein sequence ID" value="AT5G26667.2"/>
    <property type="gene ID" value="AT5G26667"/>
</dbReference>
<dbReference type="EnsemblPlants" id="AT5G26667.3">
    <molecule id="O04905-1"/>
    <property type="protein sequence ID" value="AT5G26667.3"/>
    <property type="gene ID" value="AT5G26667"/>
</dbReference>
<dbReference type="EnsemblPlants" id="AT5G26667.4">
    <molecule id="O04905-1"/>
    <property type="protein sequence ID" value="AT5G26667.4"/>
    <property type="gene ID" value="AT5G26667"/>
</dbReference>
<dbReference type="GeneID" id="832710"/>
<dbReference type="Gramene" id="AT5G26667.1">
    <molecule id="O04905-2"/>
    <property type="protein sequence ID" value="AT5G26667.1"/>
    <property type="gene ID" value="AT5G26667"/>
</dbReference>
<dbReference type="Gramene" id="AT5G26667.2">
    <molecule id="O04905-1"/>
    <property type="protein sequence ID" value="AT5G26667.2"/>
    <property type="gene ID" value="AT5G26667"/>
</dbReference>
<dbReference type="Gramene" id="AT5G26667.3">
    <molecule id="O04905-1"/>
    <property type="protein sequence ID" value="AT5G26667.3"/>
    <property type="gene ID" value="AT5G26667"/>
</dbReference>
<dbReference type="Gramene" id="AT5G26667.4">
    <molecule id="O04905-1"/>
    <property type="protein sequence ID" value="AT5G26667.4"/>
    <property type="gene ID" value="AT5G26667"/>
</dbReference>
<dbReference type="KEGG" id="ath:AT5G26667"/>
<dbReference type="Araport" id="AT5G26667"/>
<dbReference type="TAIR" id="AT5G26667">
    <property type="gene designation" value="PYR6"/>
</dbReference>
<dbReference type="eggNOG" id="KOG3079">
    <property type="taxonomic scope" value="Eukaryota"/>
</dbReference>
<dbReference type="HOGENOM" id="CLU_032354_0_1_1"/>
<dbReference type="InParanoid" id="O04905"/>
<dbReference type="OMA" id="EQTMPVI"/>
<dbReference type="OrthoDB" id="442176at2759"/>
<dbReference type="PhylomeDB" id="O04905"/>
<dbReference type="BioCyc" id="ARA:AT5G26667-MONOMER"/>
<dbReference type="BioCyc" id="MetaCyc:AT5G26667-MONOMER"/>
<dbReference type="BRENDA" id="2.7.4.14">
    <property type="organism ID" value="399"/>
</dbReference>
<dbReference type="PRO" id="PR:O04905"/>
<dbReference type="Proteomes" id="UP000006548">
    <property type="component" value="Chromosome 5"/>
</dbReference>
<dbReference type="ExpressionAtlas" id="O04905">
    <property type="expression patterns" value="baseline and differential"/>
</dbReference>
<dbReference type="GO" id="GO:0005634">
    <property type="term" value="C:nucleus"/>
    <property type="evidence" value="ECO:0007669"/>
    <property type="project" value="UniProtKB-SubCell"/>
</dbReference>
<dbReference type="GO" id="GO:0009536">
    <property type="term" value="C:plastid"/>
    <property type="evidence" value="ECO:0007005"/>
    <property type="project" value="TAIR"/>
</dbReference>
<dbReference type="GO" id="GO:0004127">
    <property type="term" value="F:(d)CMP kinase activity"/>
    <property type="evidence" value="ECO:0000314"/>
    <property type="project" value="UniProtKB"/>
</dbReference>
<dbReference type="GO" id="GO:0005524">
    <property type="term" value="F:ATP binding"/>
    <property type="evidence" value="ECO:0000314"/>
    <property type="project" value="UniProtKB"/>
</dbReference>
<dbReference type="GO" id="GO:0036430">
    <property type="term" value="F:CMP kinase activity"/>
    <property type="evidence" value="ECO:0007669"/>
    <property type="project" value="RHEA"/>
</dbReference>
<dbReference type="GO" id="GO:0036431">
    <property type="term" value="F:dCMP kinase activity"/>
    <property type="evidence" value="ECO:0007669"/>
    <property type="project" value="RHEA"/>
</dbReference>
<dbReference type="GO" id="GO:0033862">
    <property type="term" value="F:UMP kinase activity"/>
    <property type="evidence" value="ECO:0007669"/>
    <property type="project" value="RHEA"/>
</dbReference>
<dbReference type="GO" id="GO:0009041">
    <property type="term" value="F:UMP/dUMP kinase activity"/>
    <property type="evidence" value="ECO:0000314"/>
    <property type="project" value="TAIR"/>
</dbReference>
<dbReference type="GO" id="GO:0006207">
    <property type="term" value="P:'de novo' pyrimidine nucleobase biosynthetic process"/>
    <property type="evidence" value="ECO:0007669"/>
    <property type="project" value="InterPro"/>
</dbReference>
<dbReference type="GO" id="GO:0006221">
    <property type="term" value="P:pyrimidine nucleotide biosynthetic process"/>
    <property type="evidence" value="ECO:0000314"/>
    <property type="project" value="UniProtKB"/>
</dbReference>
<dbReference type="GO" id="GO:0009173">
    <property type="term" value="P:pyrimidine ribonucleoside monophosphate metabolic process"/>
    <property type="evidence" value="ECO:0000304"/>
    <property type="project" value="TAIR"/>
</dbReference>
<dbReference type="CDD" id="cd01428">
    <property type="entry name" value="ADK"/>
    <property type="match status" value="1"/>
</dbReference>
<dbReference type="FunFam" id="3.40.50.300:FF:000315">
    <property type="entry name" value="Adenylate kinase 1"/>
    <property type="match status" value="1"/>
</dbReference>
<dbReference type="Gene3D" id="3.40.50.300">
    <property type="entry name" value="P-loop containing nucleotide triphosphate hydrolases"/>
    <property type="match status" value="1"/>
</dbReference>
<dbReference type="HAMAP" id="MF_00235">
    <property type="entry name" value="Adenylate_kinase_Adk"/>
    <property type="match status" value="1"/>
</dbReference>
<dbReference type="HAMAP" id="MF_03172">
    <property type="entry name" value="Adenylate_kinase_UMP_CMP_kin"/>
    <property type="match status" value="1"/>
</dbReference>
<dbReference type="InterPro" id="IPR000850">
    <property type="entry name" value="Adenylat/UMP-CMP_kin"/>
</dbReference>
<dbReference type="InterPro" id="IPR033690">
    <property type="entry name" value="Adenylat_kinase_CS"/>
</dbReference>
<dbReference type="InterPro" id="IPR027417">
    <property type="entry name" value="P-loop_NTPase"/>
</dbReference>
<dbReference type="InterPro" id="IPR006266">
    <property type="entry name" value="UMP_CMP_kinase"/>
</dbReference>
<dbReference type="NCBIfam" id="TIGR01359">
    <property type="entry name" value="UMP_CMP_kin_fam"/>
    <property type="match status" value="1"/>
</dbReference>
<dbReference type="PANTHER" id="PTHR23359">
    <property type="entry name" value="NUCLEOTIDE KINASE"/>
    <property type="match status" value="1"/>
</dbReference>
<dbReference type="Pfam" id="PF00406">
    <property type="entry name" value="ADK"/>
    <property type="match status" value="1"/>
</dbReference>
<dbReference type="PRINTS" id="PR00094">
    <property type="entry name" value="ADENYLTKNASE"/>
</dbReference>
<dbReference type="SUPFAM" id="SSF52540">
    <property type="entry name" value="P-loop containing nucleoside triphosphate hydrolases"/>
    <property type="match status" value="1"/>
</dbReference>
<dbReference type="PROSITE" id="PS00113">
    <property type="entry name" value="ADENYLATE_KINASE"/>
    <property type="match status" value="1"/>
</dbReference>
<organism>
    <name type="scientific">Arabidopsis thaliana</name>
    <name type="common">Mouse-ear cress</name>
    <dbReference type="NCBI Taxonomy" id="3702"/>
    <lineage>
        <taxon>Eukaryota</taxon>
        <taxon>Viridiplantae</taxon>
        <taxon>Streptophyta</taxon>
        <taxon>Embryophyta</taxon>
        <taxon>Tracheophyta</taxon>
        <taxon>Spermatophyta</taxon>
        <taxon>Magnoliopsida</taxon>
        <taxon>eudicotyledons</taxon>
        <taxon>Gunneridae</taxon>
        <taxon>Pentapetalae</taxon>
        <taxon>rosids</taxon>
        <taxon>malvids</taxon>
        <taxon>Brassicales</taxon>
        <taxon>Brassicaceae</taxon>
        <taxon>Camelineae</taxon>
        <taxon>Arabidopsis</taxon>
    </lineage>
</organism>
<evidence type="ECO:0000255" key="1">
    <source>
        <dbReference type="HAMAP-Rule" id="MF_03172"/>
    </source>
</evidence>
<evidence type="ECO:0000269" key="2">
    <source>
    </source>
</evidence>
<evidence type="ECO:0000303" key="3">
    <source ref="4"/>
</evidence>
<comment type="function">
    <text>Catalyzes the phosphorylation of pyrimidine nucleoside monophosphates at the expense of ATP. Plays an important role in de novo pyrimidine nucleotide biosynthesis. Has preference for UMP and CMP as phosphate acceptors. Does not act on dCMP and dUMP.</text>
</comment>
<comment type="catalytic activity">
    <reaction evidence="1 2">
        <text>CMP + ATP = CDP + ADP</text>
        <dbReference type="Rhea" id="RHEA:11600"/>
        <dbReference type="ChEBI" id="CHEBI:30616"/>
        <dbReference type="ChEBI" id="CHEBI:58069"/>
        <dbReference type="ChEBI" id="CHEBI:60377"/>
        <dbReference type="ChEBI" id="CHEBI:456216"/>
        <dbReference type="EC" id="2.7.4.14"/>
    </reaction>
</comment>
<comment type="catalytic activity">
    <reaction evidence="1 2">
        <text>dCMP + ATP = dCDP + ADP</text>
        <dbReference type="Rhea" id="RHEA:25094"/>
        <dbReference type="ChEBI" id="CHEBI:30616"/>
        <dbReference type="ChEBI" id="CHEBI:57566"/>
        <dbReference type="ChEBI" id="CHEBI:58593"/>
        <dbReference type="ChEBI" id="CHEBI:456216"/>
        <dbReference type="EC" id="2.7.4.14"/>
    </reaction>
</comment>
<comment type="catalytic activity">
    <reaction evidence="1 2">
        <text>UMP + ATP = UDP + ADP</text>
        <dbReference type="Rhea" id="RHEA:24400"/>
        <dbReference type="ChEBI" id="CHEBI:30616"/>
        <dbReference type="ChEBI" id="CHEBI:57865"/>
        <dbReference type="ChEBI" id="CHEBI:58223"/>
        <dbReference type="ChEBI" id="CHEBI:456216"/>
        <dbReference type="EC" id="2.7.4.14"/>
    </reaction>
</comment>
<comment type="cofactor">
    <cofactor evidence="1">
        <name>Mg(2+)</name>
        <dbReference type="ChEBI" id="CHEBI:18420"/>
    </cofactor>
    <text evidence="1">Binds 1 Mg(2+) ion per monomer.</text>
</comment>
<comment type="biophysicochemical properties">
    <kinetics>
        <KM evidence="2">29.3 uM for ATP (with UMP as cosubstrate)</KM>
        <KM evidence="2">291.7 uM for ATP (with CMP as cosubstrate)</KM>
        <KM evidence="2">152.9 uM for UMP</KM>
        <KM evidence="2">266.4 uM for CMP</KM>
    </kinetics>
    <phDependence>
        <text evidence="2">Optimum pH is 6.5.</text>
    </phDependence>
</comment>
<comment type="subunit">
    <text evidence="1">Monomer.</text>
</comment>
<comment type="subcellular location">
    <subcellularLocation>
        <location evidence="1">Cytoplasm</location>
    </subcellularLocation>
    <subcellularLocation>
        <location evidence="1">Nucleus</location>
    </subcellularLocation>
</comment>
<comment type="alternative products">
    <event type="alternative splicing"/>
    <isoform>
        <id>O04905-1</id>
        <name>1</name>
        <sequence type="displayed"/>
    </isoform>
    <isoform>
        <id>O04905-2</id>
        <name>2</name>
        <sequence type="described" ref="VSP_053919"/>
    </isoform>
</comment>
<comment type="domain">
    <text evidence="1">Consists of three domains, a large central CORE domain and two small peripheral domains, NMPbind and LID, which undergo movements during catalysis. The LID domain closes over the site of phosphoryl transfer upon ATP binding. Assembling and dissambling the active center during each catalytic cycle provides an effective means to prevent ATP hydrolysis.</text>
</comment>
<comment type="mass spectrometry"/>
<comment type="similarity">
    <text evidence="1">Belongs to the adenylate kinase family. UMP-CMP kinase subfamily.</text>
</comment>
<feature type="chain" id="PRO_0000158945" description="UMP-CMP kinase 3">
    <location>
        <begin position="1"/>
        <end position="202"/>
    </location>
</feature>
<feature type="region of interest" description="NMP" evidence="1">
    <location>
        <begin position="44"/>
        <end position="73"/>
    </location>
</feature>
<feature type="region of interest" description="LID" evidence="1">
    <location>
        <begin position="136"/>
        <end position="144"/>
    </location>
</feature>
<feature type="binding site" evidence="1">
    <location>
        <begin position="24"/>
        <end position="29"/>
    </location>
    <ligand>
        <name>ATP</name>
        <dbReference type="ChEBI" id="CHEBI:30616"/>
    </ligand>
</feature>
<feature type="binding site" evidence="1">
    <location>
        <position position="50"/>
    </location>
    <ligand>
        <name>a ribonucleoside 5'-phosphate</name>
        <dbReference type="ChEBI" id="CHEBI:58043"/>
    </ligand>
</feature>
<feature type="binding site" evidence="1">
    <location>
        <begin position="71"/>
        <end position="73"/>
    </location>
    <ligand>
        <name>a ribonucleoside 5'-phosphate</name>
        <dbReference type="ChEBI" id="CHEBI:58043"/>
    </ligand>
</feature>
<feature type="binding site" evidence="1">
    <location>
        <begin position="98"/>
        <end position="101"/>
    </location>
    <ligand>
        <name>a ribonucleoside 5'-phosphate</name>
        <dbReference type="ChEBI" id="CHEBI:58043"/>
    </ligand>
</feature>
<feature type="binding site" evidence="1">
    <location>
        <position position="105"/>
    </location>
    <ligand>
        <name>CMP</name>
        <dbReference type="ChEBI" id="CHEBI:60377"/>
    </ligand>
</feature>
<feature type="binding site" evidence="1">
    <location>
        <position position="137"/>
    </location>
    <ligand>
        <name>ATP</name>
        <dbReference type="ChEBI" id="CHEBI:30616"/>
    </ligand>
</feature>
<feature type="binding site" evidence="1">
    <location>
        <position position="141"/>
    </location>
    <ligand>
        <name>a ribonucleoside 5'-phosphate</name>
        <dbReference type="ChEBI" id="CHEBI:58043"/>
    </ligand>
</feature>
<feature type="binding site" evidence="1">
    <location>
        <position position="152"/>
    </location>
    <ligand>
        <name>a ribonucleoside 5'-phosphate</name>
        <dbReference type="ChEBI" id="CHEBI:58043"/>
    </ligand>
</feature>
<feature type="binding site" evidence="1">
    <location>
        <position position="180"/>
    </location>
    <ligand>
        <name>ATP</name>
        <dbReference type="ChEBI" id="CHEBI:30616"/>
    </ligand>
</feature>
<feature type="splice variant" id="VSP_053919" description="In isoform 2." evidence="3">
    <original>EA</original>
    <variation>KLNSCAIL</variation>
    <location>
        <begin position="201"/>
        <end position="202"/>
    </location>
</feature>
<protein>
    <recommendedName>
        <fullName evidence="1">UMP-CMP kinase 3</fullName>
        <ecNumber evidence="1">2.7.4.14</ecNumber>
    </recommendedName>
    <alternativeName>
        <fullName evidence="1">Deoxycytidylate kinase</fullName>
        <shortName evidence="1">CK</shortName>
        <shortName evidence="1">dCMP kinase</shortName>
    </alternativeName>
    <alternativeName>
        <fullName evidence="1">Uridine monophosphate/cytidine monophosphate kinase</fullName>
        <shortName evidence="1">UMP/CMP kinase</shortName>
        <shortName evidence="1">UMP/CMPK</shortName>
    </alternativeName>
</protein>
<reference key="1">
    <citation type="journal article" date="1998" name="Plant Physiol.">
        <title>Cloning, expression in Escherichia coli, and characterization of Arabidopsis thaliana UMP/CMP kinase.</title>
        <authorList>
            <person name="Zhou L."/>
            <person name="Lacroute F."/>
            <person name="Thornburg R."/>
        </authorList>
    </citation>
    <scope>NUCLEOTIDE SEQUENCE [MRNA] (ISOFORM 1)</scope>
    <scope>PROTEIN SEQUENCE OF 1-15</scope>
    <scope>CATALYTIC ACTIVITY</scope>
    <scope>MASS SPECTROMETRY</scope>
    <scope>BIOPHYSICOCHEMICAL PROPERTIES</scope>
    <scope>SUBSTRATE SPECIFICITY</scope>
    <scope>REACTION MECHANISM</scope>
</reference>
<reference key="2">
    <citation type="journal article" date="2000" name="Nature">
        <title>Sequence and analysis of chromosome 5 of the plant Arabidopsis thaliana.</title>
        <authorList>
            <person name="Tabata S."/>
            <person name="Kaneko T."/>
            <person name="Nakamura Y."/>
            <person name="Kotani H."/>
            <person name="Kato T."/>
            <person name="Asamizu E."/>
            <person name="Miyajima N."/>
            <person name="Sasamoto S."/>
            <person name="Kimura T."/>
            <person name="Hosouchi T."/>
            <person name="Kawashima K."/>
            <person name="Kohara M."/>
            <person name="Matsumoto M."/>
            <person name="Matsuno A."/>
            <person name="Muraki A."/>
            <person name="Nakayama S."/>
            <person name="Nakazaki N."/>
            <person name="Naruo K."/>
            <person name="Okumura S."/>
            <person name="Shinpo S."/>
            <person name="Takeuchi C."/>
            <person name="Wada T."/>
            <person name="Watanabe A."/>
            <person name="Yamada M."/>
            <person name="Yasuda M."/>
            <person name="Sato S."/>
            <person name="de la Bastide M."/>
            <person name="Huang E."/>
            <person name="Spiegel L."/>
            <person name="Gnoj L."/>
            <person name="O'Shaughnessy A."/>
            <person name="Preston R."/>
            <person name="Habermann K."/>
            <person name="Murray J."/>
            <person name="Johnson D."/>
            <person name="Rohlfing T."/>
            <person name="Nelson J."/>
            <person name="Stoneking T."/>
            <person name="Pepin K."/>
            <person name="Spieth J."/>
            <person name="Sekhon M."/>
            <person name="Armstrong J."/>
            <person name="Becker M."/>
            <person name="Belter E."/>
            <person name="Cordum H."/>
            <person name="Cordes M."/>
            <person name="Courtney L."/>
            <person name="Courtney W."/>
            <person name="Dante M."/>
            <person name="Du H."/>
            <person name="Edwards J."/>
            <person name="Fryman J."/>
            <person name="Haakensen B."/>
            <person name="Lamar E."/>
            <person name="Latreille P."/>
            <person name="Leonard S."/>
            <person name="Meyer R."/>
            <person name="Mulvaney E."/>
            <person name="Ozersky P."/>
            <person name="Riley A."/>
            <person name="Strowmatt C."/>
            <person name="Wagner-McPherson C."/>
            <person name="Wollam A."/>
            <person name="Yoakum M."/>
            <person name="Bell M."/>
            <person name="Dedhia N."/>
            <person name="Parnell L."/>
            <person name="Shah R."/>
            <person name="Rodriguez M."/>
            <person name="Hoon See L."/>
            <person name="Vil D."/>
            <person name="Baker J."/>
            <person name="Kirchoff K."/>
            <person name="Toth K."/>
            <person name="King L."/>
            <person name="Bahret A."/>
            <person name="Miller B."/>
            <person name="Marra M.A."/>
            <person name="Martienssen R."/>
            <person name="McCombie W.R."/>
            <person name="Wilson R.K."/>
            <person name="Murphy G."/>
            <person name="Bancroft I."/>
            <person name="Volckaert G."/>
            <person name="Wambutt R."/>
            <person name="Duesterhoeft A."/>
            <person name="Stiekema W."/>
            <person name="Pohl T."/>
            <person name="Entian K.-D."/>
            <person name="Terryn N."/>
            <person name="Hartley N."/>
            <person name="Bent E."/>
            <person name="Johnson S."/>
            <person name="Langham S.-A."/>
            <person name="McCullagh B."/>
            <person name="Robben J."/>
            <person name="Grymonprez B."/>
            <person name="Zimmermann W."/>
            <person name="Ramsperger U."/>
            <person name="Wedler H."/>
            <person name="Balke K."/>
            <person name="Wedler E."/>
            <person name="Peters S."/>
            <person name="van Staveren M."/>
            <person name="Dirkse W."/>
            <person name="Mooijman P."/>
            <person name="Klein Lankhorst R."/>
            <person name="Weitzenegger T."/>
            <person name="Bothe G."/>
            <person name="Rose M."/>
            <person name="Hauf J."/>
            <person name="Berneiser S."/>
            <person name="Hempel S."/>
            <person name="Feldpausch M."/>
            <person name="Lamberth S."/>
            <person name="Villarroel R."/>
            <person name="Gielen J."/>
            <person name="Ardiles W."/>
            <person name="Bents O."/>
            <person name="Lemcke K."/>
            <person name="Kolesov G."/>
            <person name="Mayer K.F.X."/>
            <person name="Rudd S."/>
            <person name="Schoof H."/>
            <person name="Schueller C."/>
            <person name="Zaccaria P."/>
            <person name="Mewes H.-W."/>
            <person name="Bevan M."/>
            <person name="Fransz P.F."/>
        </authorList>
    </citation>
    <scope>NUCLEOTIDE SEQUENCE [LARGE SCALE GENOMIC DNA]</scope>
    <source>
        <strain>cv. Columbia</strain>
    </source>
</reference>
<reference key="3">
    <citation type="journal article" date="2017" name="Plant J.">
        <title>Araport11: a complete reannotation of the Arabidopsis thaliana reference genome.</title>
        <authorList>
            <person name="Cheng C.Y."/>
            <person name="Krishnakumar V."/>
            <person name="Chan A.P."/>
            <person name="Thibaud-Nissen F."/>
            <person name="Schobel S."/>
            <person name="Town C.D."/>
        </authorList>
    </citation>
    <scope>GENOME REANNOTATION</scope>
    <source>
        <strain>cv. Columbia</strain>
    </source>
</reference>
<reference key="4">
    <citation type="submission" date="2006-11" db="EMBL/GenBank/DDBJ databases">
        <title>Arabidopsis ORF Clones.</title>
        <authorList>
            <person name="Bautista V.R."/>
            <person name="Kim C.J."/>
            <person name="Chen H."/>
            <person name="Quinitio C."/>
            <person name="Ecker J.R."/>
        </authorList>
    </citation>
    <scope>NUCLEOTIDE SEQUENCE [LARGE SCALE MRNA] (ISOFORM 2)</scope>
</reference>
<name>KCY3_ARATH</name>
<gene>
    <name type="primary">UMK3</name>
    <name type="synonym">PYR6</name>
    <name type="ordered locus">At5g26667</name>
    <name type="ORF">T7I7.5</name>
</gene>
<accession>O04905</accession>
<accession>A0JQ75</accession>
<keyword id="KW-0025">Alternative splicing</keyword>
<keyword id="KW-0067">ATP-binding</keyword>
<keyword id="KW-0963">Cytoplasm</keyword>
<keyword id="KW-0903">Direct protein sequencing</keyword>
<keyword id="KW-0418">Kinase</keyword>
<keyword id="KW-0547">Nucleotide-binding</keyword>
<keyword id="KW-0539">Nucleus</keyword>
<keyword id="KW-0665">Pyrimidine biosynthesis</keyword>
<keyword id="KW-1185">Reference proteome</keyword>
<keyword id="KW-0808">Transferase</keyword>
<sequence>MGSVDAANGSGKKPTVIFVLGGPGSGKGTQCAYIVEHYGYTHLSAGDLLRAEIKSGSENGTMIQNMIKEGKIVPSEVTIKLLQKAIQENGNDKFLIDGFPRNEENRAAFEKVTEIEPKFVLFFDCPEEEMEKRLLGRNQGREDDNIETIRKRFKVFLESSLPVIHYYEAKGKVRKINAAKPIEAVFEEVKAIFSPEAEKVEA</sequence>
<proteinExistence type="evidence at protein level"/>